<proteinExistence type="inferred from homology"/>
<reference key="1">
    <citation type="journal article" date="2009" name="J. Bacteriol.">
        <title>Genomic sequencing reveals regulatory mutations and recombinational events in the widely used MC4100 lineage of Escherichia coli K-12.</title>
        <authorList>
            <person name="Ferenci T."/>
            <person name="Zhou Z."/>
            <person name="Betteridge T."/>
            <person name="Ren Y."/>
            <person name="Liu Y."/>
            <person name="Feng L."/>
            <person name="Reeves P.R."/>
            <person name="Wang L."/>
        </authorList>
    </citation>
    <scope>NUCLEOTIDE SEQUENCE [LARGE SCALE GENOMIC DNA]</scope>
    <source>
        <strain>K12 / MC4100 / BW2952</strain>
    </source>
</reference>
<dbReference type="EMBL" id="CP001396">
    <property type="protein sequence ID" value="ACR63811.1"/>
    <property type="molecule type" value="Genomic_DNA"/>
</dbReference>
<dbReference type="RefSeq" id="WP_000130850.1">
    <property type="nucleotide sequence ID" value="NC_012759.1"/>
</dbReference>
<dbReference type="SMR" id="C4ZSG5"/>
<dbReference type="KEGG" id="ebw:BWG_1867"/>
<dbReference type="HOGENOM" id="CLU_000960_28_0_6"/>
<dbReference type="GO" id="GO:0005886">
    <property type="term" value="C:plasma membrane"/>
    <property type="evidence" value="ECO:0007669"/>
    <property type="project" value="UniProtKB-SubCell"/>
</dbReference>
<dbReference type="GO" id="GO:0022857">
    <property type="term" value="F:transmembrane transporter activity"/>
    <property type="evidence" value="ECO:0007669"/>
    <property type="project" value="UniProtKB-UniRule"/>
</dbReference>
<dbReference type="CDD" id="cd17503">
    <property type="entry name" value="MFS_LmrB_MDR_like"/>
    <property type="match status" value="1"/>
</dbReference>
<dbReference type="FunFam" id="1.20.1250.20:FF:000021">
    <property type="entry name" value="Putative multidrug resistance protein MdtD"/>
    <property type="match status" value="1"/>
</dbReference>
<dbReference type="FunFam" id="1.20.1720.10:FF:000001">
    <property type="entry name" value="Putative multidrug resistance protein MdtD"/>
    <property type="match status" value="1"/>
</dbReference>
<dbReference type="Gene3D" id="1.20.1250.20">
    <property type="entry name" value="MFS general substrate transporter like domains"/>
    <property type="match status" value="1"/>
</dbReference>
<dbReference type="Gene3D" id="1.20.1720.10">
    <property type="entry name" value="Multidrug resistance protein D"/>
    <property type="match status" value="1"/>
</dbReference>
<dbReference type="HAMAP" id="MF_01577">
    <property type="entry name" value="MFS_MdtD"/>
    <property type="match status" value="1"/>
</dbReference>
<dbReference type="InterPro" id="IPR004638">
    <property type="entry name" value="EmrB-like"/>
</dbReference>
<dbReference type="InterPro" id="IPR011701">
    <property type="entry name" value="MFS"/>
</dbReference>
<dbReference type="InterPro" id="IPR020846">
    <property type="entry name" value="MFS_dom"/>
</dbReference>
<dbReference type="InterPro" id="IPR036259">
    <property type="entry name" value="MFS_trans_sf"/>
</dbReference>
<dbReference type="InterPro" id="IPR023721">
    <property type="entry name" value="Multi-R_MdtD"/>
</dbReference>
<dbReference type="NCBIfam" id="TIGR00711">
    <property type="entry name" value="efflux_EmrB"/>
    <property type="match status" value="1"/>
</dbReference>
<dbReference type="NCBIfam" id="NF007799">
    <property type="entry name" value="PRK10504.1"/>
    <property type="match status" value="1"/>
</dbReference>
<dbReference type="PANTHER" id="PTHR42718:SF46">
    <property type="entry name" value="BLR6921 PROTEIN"/>
    <property type="match status" value="1"/>
</dbReference>
<dbReference type="PANTHER" id="PTHR42718">
    <property type="entry name" value="MAJOR FACILITATOR SUPERFAMILY MULTIDRUG TRANSPORTER MFSC"/>
    <property type="match status" value="1"/>
</dbReference>
<dbReference type="Pfam" id="PF07690">
    <property type="entry name" value="MFS_1"/>
    <property type="match status" value="1"/>
</dbReference>
<dbReference type="PRINTS" id="PR01036">
    <property type="entry name" value="TCRTETB"/>
</dbReference>
<dbReference type="SUPFAM" id="SSF103473">
    <property type="entry name" value="MFS general substrate transporter"/>
    <property type="match status" value="1"/>
</dbReference>
<dbReference type="PROSITE" id="PS50850">
    <property type="entry name" value="MFS"/>
    <property type="match status" value="1"/>
</dbReference>
<organism>
    <name type="scientific">Escherichia coli (strain K12 / MC4100 / BW2952)</name>
    <dbReference type="NCBI Taxonomy" id="595496"/>
    <lineage>
        <taxon>Bacteria</taxon>
        <taxon>Pseudomonadati</taxon>
        <taxon>Pseudomonadota</taxon>
        <taxon>Gammaproteobacteria</taxon>
        <taxon>Enterobacterales</taxon>
        <taxon>Enterobacteriaceae</taxon>
        <taxon>Escherichia</taxon>
    </lineage>
</organism>
<accession>C4ZSG5</accession>
<keyword id="KW-0997">Cell inner membrane</keyword>
<keyword id="KW-1003">Cell membrane</keyword>
<keyword id="KW-0472">Membrane</keyword>
<keyword id="KW-0812">Transmembrane</keyword>
<keyword id="KW-1133">Transmembrane helix</keyword>
<keyword id="KW-0813">Transport</keyword>
<gene>
    <name evidence="1" type="primary">mdtD</name>
    <name type="ordered locus">BWG_1867</name>
</gene>
<protein>
    <recommendedName>
        <fullName evidence="1">Putative multidrug resistance protein MdtD</fullName>
    </recommendedName>
</protein>
<feature type="chain" id="PRO_1000215612" description="Putative multidrug resistance protein MdtD">
    <location>
        <begin position="1"/>
        <end position="471"/>
    </location>
</feature>
<feature type="topological domain" description="Periplasmic" evidence="1">
    <location>
        <begin position="1"/>
        <end position="11"/>
    </location>
</feature>
<feature type="transmembrane region" description="Helical" evidence="1">
    <location>
        <begin position="12"/>
        <end position="32"/>
    </location>
</feature>
<feature type="topological domain" description="Cytoplasmic" evidence="1">
    <location>
        <begin position="33"/>
        <end position="48"/>
    </location>
</feature>
<feature type="transmembrane region" description="Helical" evidence="1">
    <location>
        <begin position="49"/>
        <end position="69"/>
    </location>
</feature>
<feature type="topological domain" description="Periplasmic" evidence="1">
    <location>
        <begin position="70"/>
        <end position="76"/>
    </location>
</feature>
<feature type="transmembrane region" description="Helical" evidence="1">
    <location>
        <begin position="77"/>
        <end position="97"/>
    </location>
</feature>
<feature type="topological domain" description="Cytoplasmic" evidence="1">
    <location>
        <begin position="98"/>
        <end position="101"/>
    </location>
</feature>
<feature type="transmembrane region" description="Helical" evidence="1">
    <location>
        <begin position="102"/>
        <end position="124"/>
    </location>
</feature>
<feature type="topological domain" description="Periplasmic" evidence="1">
    <location>
        <begin position="125"/>
        <end position="137"/>
    </location>
</feature>
<feature type="transmembrane region" description="Helical" evidence="1">
    <location>
        <begin position="138"/>
        <end position="158"/>
    </location>
</feature>
<feature type="topological domain" description="Cytoplasmic" evidence="1">
    <location>
        <begin position="159"/>
        <end position="164"/>
    </location>
</feature>
<feature type="transmembrane region" description="Helical" evidence="1">
    <location>
        <begin position="165"/>
        <end position="185"/>
    </location>
</feature>
<feature type="topological domain" description="Periplasmic" evidence="1">
    <location>
        <begin position="186"/>
        <end position="196"/>
    </location>
</feature>
<feature type="transmembrane region" description="Helical" evidence="1">
    <location>
        <begin position="197"/>
        <end position="217"/>
    </location>
</feature>
<feature type="topological domain" description="Cytoplasmic" evidence="1">
    <location>
        <begin position="218"/>
        <end position="224"/>
    </location>
</feature>
<feature type="transmembrane region" description="Helical" evidence="1">
    <location>
        <begin position="225"/>
        <end position="245"/>
    </location>
</feature>
<feature type="topological domain" description="Periplasmic" evidence="1">
    <location>
        <begin position="246"/>
        <end position="262"/>
    </location>
</feature>
<feature type="transmembrane region" description="Helical" evidence="1">
    <location>
        <begin position="263"/>
        <end position="283"/>
    </location>
</feature>
<feature type="topological domain" description="Cytoplasmic" evidence="1">
    <location>
        <begin position="284"/>
        <end position="285"/>
    </location>
</feature>
<feature type="transmembrane region" description="Helical" evidence="1">
    <location>
        <begin position="286"/>
        <end position="306"/>
    </location>
</feature>
<feature type="topological domain" description="Periplasmic" evidence="1">
    <location>
        <begin position="307"/>
        <end position="341"/>
    </location>
</feature>
<feature type="transmembrane region" description="Helical" evidence="1">
    <location>
        <begin position="342"/>
        <end position="362"/>
    </location>
</feature>
<feature type="topological domain" description="Cytoplasmic" evidence="1">
    <location>
        <begin position="363"/>
        <end position="395"/>
    </location>
</feature>
<feature type="transmembrane region" description="Helical" evidence="1">
    <location>
        <begin position="396"/>
        <end position="416"/>
    </location>
</feature>
<feature type="topological domain" description="Periplasmic" evidence="1">
    <location>
        <begin position="417"/>
        <end position="430"/>
    </location>
</feature>
<feature type="transmembrane region" description="Helical" evidence="1">
    <location>
        <begin position="431"/>
        <end position="451"/>
    </location>
</feature>
<feature type="topological domain" description="Cytoplasmic" evidence="1">
    <location>
        <begin position="452"/>
        <end position="471"/>
    </location>
</feature>
<name>MDTD_ECOBW</name>
<evidence type="ECO:0000255" key="1">
    <source>
        <dbReference type="HAMAP-Rule" id="MF_01577"/>
    </source>
</evidence>
<comment type="subcellular location">
    <subcellularLocation>
        <location evidence="1">Cell inner membrane</location>
        <topology evidence="1">Multi-pass membrane protein</topology>
    </subcellularLocation>
</comment>
<comment type="similarity">
    <text evidence="1">Belongs to the major facilitator superfamily. TCR/Tet family.</text>
</comment>
<sequence length="471" mass="50901">MTDLPDSTRWQLWIVAFGFFMQSLDTTIVNTALPSMAQSLGESPLHMHMVIVSYVLTVAVMLPASGWLADKVGVRNIFFTAIVLFTLGSLFCALSGTLNELLLARALQGVGGAMMVPVGRLTVMKIVPREQYMAAMTFVTLPGQVGPLLGPALGGLLVEYASWHWIFLINIPVGIIGAIATLLLMPNYTMQTRRFDLSGFLLLAVGMAVLTLALDGSKGTGLSPLTIAGLVAVGVVALVLYLLHARNNNRALFSLKLFRTRTFSLGLAGSFAGRIGSGMLPFMTPVFLQIGLGFSPFHAGLMMIPMVLGSMGMKRIVVQVVNRFGYRRVLVATTLGLSLVTLLFMTTALLGWYYVLPFVLFLQGMVNSTRFSSMNTLTLKDLPDNLASSGNSLLSMIMQLSMSIGVTIAGLLLGLFGSQHVSVDSGTTQTVFMYTWLSMALIIALPAFIFARVPNDTHQNVAISRRKRSAQ</sequence>